<keyword id="KW-0004">4Fe-4S</keyword>
<keyword id="KW-0028">Amino-acid biosynthesis</keyword>
<keyword id="KW-0100">Branched-chain amino acid biosynthesis</keyword>
<keyword id="KW-0408">Iron</keyword>
<keyword id="KW-0411">Iron-sulfur</keyword>
<keyword id="KW-0432">Leucine biosynthesis</keyword>
<keyword id="KW-0456">Lyase</keyword>
<keyword id="KW-0479">Metal-binding</keyword>
<keyword id="KW-1185">Reference proteome</keyword>
<dbReference type="EC" id="4.2.1.33" evidence="1"/>
<dbReference type="EMBL" id="CU928161">
    <property type="protein sequence ID" value="CAR01443.1"/>
    <property type="molecule type" value="Genomic_DNA"/>
</dbReference>
<dbReference type="RefSeq" id="WP_001140652.1">
    <property type="nucleotide sequence ID" value="NC_011742.1"/>
</dbReference>
<dbReference type="SMR" id="B7MAJ7"/>
<dbReference type="GeneID" id="75202111"/>
<dbReference type="KEGG" id="ecz:ECS88_0077"/>
<dbReference type="HOGENOM" id="CLU_006714_3_4_6"/>
<dbReference type="UniPathway" id="UPA00048">
    <property type="reaction ID" value="UER00071"/>
</dbReference>
<dbReference type="Proteomes" id="UP000000747">
    <property type="component" value="Chromosome"/>
</dbReference>
<dbReference type="GO" id="GO:0003861">
    <property type="term" value="F:3-isopropylmalate dehydratase activity"/>
    <property type="evidence" value="ECO:0007669"/>
    <property type="project" value="UniProtKB-UniRule"/>
</dbReference>
<dbReference type="GO" id="GO:0051539">
    <property type="term" value="F:4 iron, 4 sulfur cluster binding"/>
    <property type="evidence" value="ECO:0007669"/>
    <property type="project" value="UniProtKB-KW"/>
</dbReference>
<dbReference type="GO" id="GO:0046872">
    <property type="term" value="F:metal ion binding"/>
    <property type="evidence" value="ECO:0007669"/>
    <property type="project" value="UniProtKB-KW"/>
</dbReference>
<dbReference type="GO" id="GO:0009098">
    <property type="term" value="P:L-leucine biosynthetic process"/>
    <property type="evidence" value="ECO:0007669"/>
    <property type="project" value="UniProtKB-UniRule"/>
</dbReference>
<dbReference type="CDD" id="cd01583">
    <property type="entry name" value="IPMI"/>
    <property type="match status" value="1"/>
</dbReference>
<dbReference type="FunFam" id="3.30.499.10:FF:000006">
    <property type="entry name" value="3-isopropylmalate dehydratase large subunit"/>
    <property type="match status" value="1"/>
</dbReference>
<dbReference type="FunFam" id="3.30.499.10:FF:000007">
    <property type="entry name" value="3-isopropylmalate dehydratase large subunit"/>
    <property type="match status" value="1"/>
</dbReference>
<dbReference type="Gene3D" id="3.30.499.10">
    <property type="entry name" value="Aconitase, domain 3"/>
    <property type="match status" value="2"/>
</dbReference>
<dbReference type="HAMAP" id="MF_01026">
    <property type="entry name" value="LeuC_type1"/>
    <property type="match status" value="1"/>
</dbReference>
<dbReference type="InterPro" id="IPR004430">
    <property type="entry name" value="3-IsopropMal_deHydase_lsu"/>
</dbReference>
<dbReference type="InterPro" id="IPR015931">
    <property type="entry name" value="Acnase/IPM_dHydase_lsu_aba_1/3"/>
</dbReference>
<dbReference type="InterPro" id="IPR001030">
    <property type="entry name" value="Acoase/IPM_deHydtase_lsu_aba"/>
</dbReference>
<dbReference type="InterPro" id="IPR018136">
    <property type="entry name" value="Aconitase_4Fe-4S_BS"/>
</dbReference>
<dbReference type="InterPro" id="IPR036008">
    <property type="entry name" value="Aconitase_4Fe-4S_dom"/>
</dbReference>
<dbReference type="InterPro" id="IPR050067">
    <property type="entry name" value="IPM_dehydratase_rel_enz"/>
</dbReference>
<dbReference type="InterPro" id="IPR033941">
    <property type="entry name" value="IPMI_cat"/>
</dbReference>
<dbReference type="NCBIfam" id="TIGR00170">
    <property type="entry name" value="leuC"/>
    <property type="match status" value="1"/>
</dbReference>
<dbReference type="NCBIfam" id="NF004016">
    <property type="entry name" value="PRK05478.1"/>
    <property type="match status" value="1"/>
</dbReference>
<dbReference type="NCBIfam" id="NF009116">
    <property type="entry name" value="PRK12466.1"/>
    <property type="match status" value="1"/>
</dbReference>
<dbReference type="PANTHER" id="PTHR43822:SF9">
    <property type="entry name" value="3-ISOPROPYLMALATE DEHYDRATASE"/>
    <property type="match status" value="1"/>
</dbReference>
<dbReference type="PANTHER" id="PTHR43822">
    <property type="entry name" value="HOMOACONITASE, MITOCHONDRIAL-RELATED"/>
    <property type="match status" value="1"/>
</dbReference>
<dbReference type="Pfam" id="PF00330">
    <property type="entry name" value="Aconitase"/>
    <property type="match status" value="1"/>
</dbReference>
<dbReference type="PRINTS" id="PR00415">
    <property type="entry name" value="ACONITASE"/>
</dbReference>
<dbReference type="SUPFAM" id="SSF53732">
    <property type="entry name" value="Aconitase iron-sulfur domain"/>
    <property type="match status" value="1"/>
</dbReference>
<dbReference type="PROSITE" id="PS00450">
    <property type="entry name" value="ACONITASE_1"/>
    <property type="match status" value="1"/>
</dbReference>
<dbReference type="PROSITE" id="PS01244">
    <property type="entry name" value="ACONITASE_2"/>
    <property type="match status" value="1"/>
</dbReference>
<organism>
    <name type="scientific">Escherichia coli O45:K1 (strain S88 / ExPEC)</name>
    <dbReference type="NCBI Taxonomy" id="585035"/>
    <lineage>
        <taxon>Bacteria</taxon>
        <taxon>Pseudomonadati</taxon>
        <taxon>Pseudomonadota</taxon>
        <taxon>Gammaproteobacteria</taxon>
        <taxon>Enterobacterales</taxon>
        <taxon>Enterobacteriaceae</taxon>
        <taxon>Escherichia</taxon>
    </lineage>
</organism>
<protein>
    <recommendedName>
        <fullName evidence="1">3-isopropylmalate dehydratase large subunit</fullName>
        <ecNumber evidence="1">4.2.1.33</ecNumber>
    </recommendedName>
    <alternativeName>
        <fullName evidence="1">Alpha-IPM isomerase</fullName>
        <shortName evidence="1">IPMI</shortName>
    </alternativeName>
    <alternativeName>
        <fullName evidence="1">Isopropylmalate isomerase</fullName>
    </alternativeName>
</protein>
<proteinExistence type="inferred from homology"/>
<gene>
    <name evidence="1" type="primary">leuC</name>
    <name type="ordered locus">ECS88_0077</name>
</gene>
<name>LEUC_ECO45</name>
<comment type="function">
    <text evidence="1">Catalyzes the isomerization between 2-isopropylmalate and 3-isopropylmalate, via the formation of 2-isopropylmaleate.</text>
</comment>
<comment type="catalytic activity">
    <reaction evidence="1">
        <text>(2R,3S)-3-isopropylmalate = (2S)-2-isopropylmalate</text>
        <dbReference type="Rhea" id="RHEA:32287"/>
        <dbReference type="ChEBI" id="CHEBI:1178"/>
        <dbReference type="ChEBI" id="CHEBI:35121"/>
        <dbReference type="EC" id="4.2.1.33"/>
    </reaction>
</comment>
<comment type="cofactor">
    <cofactor evidence="1">
        <name>[4Fe-4S] cluster</name>
        <dbReference type="ChEBI" id="CHEBI:49883"/>
    </cofactor>
    <text evidence="1">Binds 1 [4Fe-4S] cluster per subunit.</text>
</comment>
<comment type="pathway">
    <text evidence="1">Amino-acid biosynthesis; L-leucine biosynthesis; L-leucine from 3-methyl-2-oxobutanoate: step 2/4.</text>
</comment>
<comment type="subunit">
    <text evidence="1">Heterodimer of LeuC and LeuD.</text>
</comment>
<comment type="similarity">
    <text evidence="1">Belongs to the aconitase/IPM isomerase family. LeuC type 1 subfamily.</text>
</comment>
<reference key="1">
    <citation type="journal article" date="2009" name="PLoS Genet.">
        <title>Organised genome dynamics in the Escherichia coli species results in highly diverse adaptive paths.</title>
        <authorList>
            <person name="Touchon M."/>
            <person name="Hoede C."/>
            <person name="Tenaillon O."/>
            <person name="Barbe V."/>
            <person name="Baeriswyl S."/>
            <person name="Bidet P."/>
            <person name="Bingen E."/>
            <person name="Bonacorsi S."/>
            <person name="Bouchier C."/>
            <person name="Bouvet O."/>
            <person name="Calteau A."/>
            <person name="Chiapello H."/>
            <person name="Clermont O."/>
            <person name="Cruveiller S."/>
            <person name="Danchin A."/>
            <person name="Diard M."/>
            <person name="Dossat C."/>
            <person name="Karoui M.E."/>
            <person name="Frapy E."/>
            <person name="Garry L."/>
            <person name="Ghigo J.M."/>
            <person name="Gilles A.M."/>
            <person name="Johnson J."/>
            <person name="Le Bouguenec C."/>
            <person name="Lescat M."/>
            <person name="Mangenot S."/>
            <person name="Martinez-Jehanne V."/>
            <person name="Matic I."/>
            <person name="Nassif X."/>
            <person name="Oztas S."/>
            <person name="Petit M.A."/>
            <person name="Pichon C."/>
            <person name="Rouy Z."/>
            <person name="Ruf C.S."/>
            <person name="Schneider D."/>
            <person name="Tourret J."/>
            <person name="Vacherie B."/>
            <person name="Vallenet D."/>
            <person name="Medigue C."/>
            <person name="Rocha E.P.C."/>
            <person name="Denamur E."/>
        </authorList>
    </citation>
    <scope>NUCLEOTIDE SEQUENCE [LARGE SCALE GENOMIC DNA]</scope>
    <source>
        <strain>S88 / ExPEC</strain>
    </source>
</reference>
<sequence length="466" mass="49882">MAKTLYEKLFDAHVVYEAENETPLLYIDRHLVHEVTSPQAFDGLRAHGRPVRQPGKTFATMDHNVSTQTKDINACGEMARIQMQELIKNCKEFGVELYDLNHPYQGIVHVMGPEQGVTLPGMTIVCGDSHTATHGAFGALAFGIGTSEVEHVLATQTLKQGRAKTMKIEVQGKAAPGITAKDIVLAIIGKTGSAGGTGHVVEFCGEAIRDLSMEGRMTLCNMAIEMGAKAGLVAPDETTFNYVKGRLHAPKGKDFDDAVAYWKTLQTDEGATFDTVVTLQAEEISPQVTWGTNPGQVISVNDNIPDPASFADPVERASAEKALAYMGLKPGIPLTEVAIDKVFIGSCTNSRIEDLRAAAEIAKGRKVAPGVQALVVPGSGPVKAQAEAEGLDKIFIEAGFEWRLPGCSMCLAMNNDRLNPGERCASTSNRNFEGRQGRGGRTHLVSPAMAAAAAVTGHFADIRNIK</sequence>
<feature type="chain" id="PRO_1000135679" description="3-isopropylmalate dehydratase large subunit">
    <location>
        <begin position="1"/>
        <end position="466"/>
    </location>
</feature>
<feature type="binding site" evidence="1">
    <location>
        <position position="347"/>
    </location>
    <ligand>
        <name>[4Fe-4S] cluster</name>
        <dbReference type="ChEBI" id="CHEBI:49883"/>
    </ligand>
</feature>
<feature type="binding site" evidence="1">
    <location>
        <position position="407"/>
    </location>
    <ligand>
        <name>[4Fe-4S] cluster</name>
        <dbReference type="ChEBI" id="CHEBI:49883"/>
    </ligand>
</feature>
<feature type="binding site" evidence="1">
    <location>
        <position position="410"/>
    </location>
    <ligand>
        <name>[4Fe-4S] cluster</name>
        <dbReference type="ChEBI" id="CHEBI:49883"/>
    </ligand>
</feature>
<evidence type="ECO:0000255" key="1">
    <source>
        <dbReference type="HAMAP-Rule" id="MF_01026"/>
    </source>
</evidence>
<accession>B7MAJ7</accession>